<reference key="1">
    <citation type="journal article" date="2001" name="J. Biol. Chem.">
        <title>Molecular cloning and characterization of a novel (Na+,K+)/H+ exchanger localized to the trans-Golgi network.</title>
        <authorList>
            <person name="Numata M."/>
            <person name="Orlowski J."/>
        </authorList>
    </citation>
    <scope>NUCLEOTIDE SEQUENCE [MRNA]</scope>
    <scope>FUNCTION</scope>
    <scope>TRANSPORTER ACTIVITY</scope>
    <scope>TISSUE SPECIFICITY</scope>
    <scope>ACTIVITY REGULATION</scope>
</reference>
<reference key="2">
    <citation type="journal article" date="2005" name="Nature">
        <title>The DNA sequence of the human X chromosome.</title>
        <authorList>
            <person name="Ross M.T."/>
            <person name="Grafham D.V."/>
            <person name="Coffey A.J."/>
            <person name="Scherer S."/>
            <person name="McLay K."/>
            <person name="Muzny D."/>
            <person name="Platzer M."/>
            <person name="Howell G.R."/>
            <person name="Burrows C."/>
            <person name="Bird C.P."/>
            <person name="Frankish A."/>
            <person name="Lovell F.L."/>
            <person name="Howe K.L."/>
            <person name="Ashurst J.L."/>
            <person name="Fulton R.S."/>
            <person name="Sudbrak R."/>
            <person name="Wen G."/>
            <person name="Jones M.C."/>
            <person name="Hurles M.E."/>
            <person name="Andrews T.D."/>
            <person name="Scott C.E."/>
            <person name="Searle S."/>
            <person name="Ramser J."/>
            <person name="Whittaker A."/>
            <person name="Deadman R."/>
            <person name="Carter N.P."/>
            <person name="Hunt S.E."/>
            <person name="Chen R."/>
            <person name="Cree A."/>
            <person name="Gunaratne P."/>
            <person name="Havlak P."/>
            <person name="Hodgson A."/>
            <person name="Metzker M.L."/>
            <person name="Richards S."/>
            <person name="Scott G."/>
            <person name="Steffen D."/>
            <person name="Sodergren E."/>
            <person name="Wheeler D.A."/>
            <person name="Worley K.C."/>
            <person name="Ainscough R."/>
            <person name="Ambrose K.D."/>
            <person name="Ansari-Lari M.A."/>
            <person name="Aradhya S."/>
            <person name="Ashwell R.I."/>
            <person name="Babbage A.K."/>
            <person name="Bagguley C.L."/>
            <person name="Ballabio A."/>
            <person name="Banerjee R."/>
            <person name="Barker G.E."/>
            <person name="Barlow K.F."/>
            <person name="Barrett I.P."/>
            <person name="Bates K.N."/>
            <person name="Beare D.M."/>
            <person name="Beasley H."/>
            <person name="Beasley O."/>
            <person name="Beck A."/>
            <person name="Bethel G."/>
            <person name="Blechschmidt K."/>
            <person name="Brady N."/>
            <person name="Bray-Allen S."/>
            <person name="Bridgeman A.M."/>
            <person name="Brown A.J."/>
            <person name="Brown M.J."/>
            <person name="Bonnin D."/>
            <person name="Bruford E.A."/>
            <person name="Buhay C."/>
            <person name="Burch P."/>
            <person name="Burford D."/>
            <person name="Burgess J."/>
            <person name="Burrill W."/>
            <person name="Burton J."/>
            <person name="Bye J.M."/>
            <person name="Carder C."/>
            <person name="Carrel L."/>
            <person name="Chako J."/>
            <person name="Chapman J.C."/>
            <person name="Chavez D."/>
            <person name="Chen E."/>
            <person name="Chen G."/>
            <person name="Chen Y."/>
            <person name="Chen Z."/>
            <person name="Chinault C."/>
            <person name="Ciccodicola A."/>
            <person name="Clark S.Y."/>
            <person name="Clarke G."/>
            <person name="Clee C.M."/>
            <person name="Clegg S."/>
            <person name="Clerc-Blankenburg K."/>
            <person name="Clifford K."/>
            <person name="Cobley V."/>
            <person name="Cole C.G."/>
            <person name="Conquer J.S."/>
            <person name="Corby N."/>
            <person name="Connor R.E."/>
            <person name="David R."/>
            <person name="Davies J."/>
            <person name="Davis C."/>
            <person name="Davis J."/>
            <person name="Delgado O."/>
            <person name="Deshazo D."/>
            <person name="Dhami P."/>
            <person name="Ding Y."/>
            <person name="Dinh H."/>
            <person name="Dodsworth S."/>
            <person name="Draper H."/>
            <person name="Dugan-Rocha S."/>
            <person name="Dunham A."/>
            <person name="Dunn M."/>
            <person name="Durbin K.J."/>
            <person name="Dutta I."/>
            <person name="Eades T."/>
            <person name="Ellwood M."/>
            <person name="Emery-Cohen A."/>
            <person name="Errington H."/>
            <person name="Evans K.L."/>
            <person name="Faulkner L."/>
            <person name="Francis F."/>
            <person name="Frankland J."/>
            <person name="Fraser A.E."/>
            <person name="Galgoczy P."/>
            <person name="Gilbert J."/>
            <person name="Gill R."/>
            <person name="Gloeckner G."/>
            <person name="Gregory S.G."/>
            <person name="Gribble S."/>
            <person name="Griffiths C."/>
            <person name="Grocock R."/>
            <person name="Gu Y."/>
            <person name="Gwilliam R."/>
            <person name="Hamilton C."/>
            <person name="Hart E.A."/>
            <person name="Hawes A."/>
            <person name="Heath P.D."/>
            <person name="Heitmann K."/>
            <person name="Hennig S."/>
            <person name="Hernandez J."/>
            <person name="Hinzmann B."/>
            <person name="Ho S."/>
            <person name="Hoffs M."/>
            <person name="Howden P.J."/>
            <person name="Huckle E.J."/>
            <person name="Hume J."/>
            <person name="Hunt P.J."/>
            <person name="Hunt A.R."/>
            <person name="Isherwood J."/>
            <person name="Jacob L."/>
            <person name="Johnson D."/>
            <person name="Jones S."/>
            <person name="de Jong P.J."/>
            <person name="Joseph S.S."/>
            <person name="Keenan S."/>
            <person name="Kelly S."/>
            <person name="Kershaw J.K."/>
            <person name="Khan Z."/>
            <person name="Kioschis P."/>
            <person name="Klages S."/>
            <person name="Knights A.J."/>
            <person name="Kosiura A."/>
            <person name="Kovar-Smith C."/>
            <person name="Laird G.K."/>
            <person name="Langford C."/>
            <person name="Lawlor S."/>
            <person name="Leversha M."/>
            <person name="Lewis L."/>
            <person name="Liu W."/>
            <person name="Lloyd C."/>
            <person name="Lloyd D.M."/>
            <person name="Loulseged H."/>
            <person name="Loveland J.E."/>
            <person name="Lovell J.D."/>
            <person name="Lozado R."/>
            <person name="Lu J."/>
            <person name="Lyne R."/>
            <person name="Ma J."/>
            <person name="Maheshwari M."/>
            <person name="Matthews L.H."/>
            <person name="McDowall J."/>
            <person name="McLaren S."/>
            <person name="McMurray A."/>
            <person name="Meidl P."/>
            <person name="Meitinger T."/>
            <person name="Milne S."/>
            <person name="Miner G."/>
            <person name="Mistry S.L."/>
            <person name="Morgan M."/>
            <person name="Morris S."/>
            <person name="Mueller I."/>
            <person name="Mullikin J.C."/>
            <person name="Nguyen N."/>
            <person name="Nordsiek G."/>
            <person name="Nyakatura G."/>
            <person name="O'dell C.N."/>
            <person name="Okwuonu G."/>
            <person name="Palmer S."/>
            <person name="Pandian R."/>
            <person name="Parker D."/>
            <person name="Parrish J."/>
            <person name="Pasternak S."/>
            <person name="Patel D."/>
            <person name="Pearce A.V."/>
            <person name="Pearson D.M."/>
            <person name="Pelan S.E."/>
            <person name="Perez L."/>
            <person name="Porter K.M."/>
            <person name="Ramsey Y."/>
            <person name="Reichwald K."/>
            <person name="Rhodes S."/>
            <person name="Ridler K.A."/>
            <person name="Schlessinger D."/>
            <person name="Schueler M.G."/>
            <person name="Sehra H.K."/>
            <person name="Shaw-Smith C."/>
            <person name="Shen H."/>
            <person name="Sheridan E.M."/>
            <person name="Shownkeen R."/>
            <person name="Skuce C.D."/>
            <person name="Smith M.L."/>
            <person name="Sotheran E.C."/>
            <person name="Steingruber H.E."/>
            <person name="Steward C.A."/>
            <person name="Storey R."/>
            <person name="Swann R.M."/>
            <person name="Swarbreck D."/>
            <person name="Tabor P.E."/>
            <person name="Taudien S."/>
            <person name="Taylor T."/>
            <person name="Teague B."/>
            <person name="Thomas K."/>
            <person name="Thorpe A."/>
            <person name="Timms K."/>
            <person name="Tracey A."/>
            <person name="Trevanion S."/>
            <person name="Tromans A.C."/>
            <person name="d'Urso M."/>
            <person name="Verduzco D."/>
            <person name="Villasana D."/>
            <person name="Waldron L."/>
            <person name="Wall M."/>
            <person name="Wang Q."/>
            <person name="Warren J."/>
            <person name="Warry G.L."/>
            <person name="Wei X."/>
            <person name="West A."/>
            <person name="Whitehead S.L."/>
            <person name="Whiteley M.N."/>
            <person name="Wilkinson J.E."/>
            <person name="Willey D.L."/>
            <person name="Williams G."/>
            <person name="Williams L."/>
            <person name="Williamson A."/>
            <person name="Williamson H."/>
            <person name="Wilming L."/>
            <person name="Woodmansey R.L."/>
            <person name="Wray P.W."/>
            <person name="Yen J."/>
            <person name="Zhang J."/>
            <person name="Zhou J."/>
            <person name="Zoghbi H."/>
            <person name="Zorilla S."/>
            <person name="Buck D."/>
            <person name="Reinhardt R."/>
            <person name="Poustka A."/>
            <person name="Rosenthal A."/>
            <person name="Lehrach H."/>
            <person name="Meindl A."/>
            <person name="Minx P.J."/>
            <person name="Hillier L.W."/>
            <person name="Willard H.F."/>
            <person name="Wilson R.K."/>
            <person name="Waterston R.H."/>
            <person name="Rice C.M."/>
            <person name="Vaudin M."/>
            <person name="Coulson A."/>
            <person name="Nelson D.L."/>
            <person name="Weinstock G."/>
            <person name="Sulston J.E."/>
            <person name="Durbin R.M."/>
            <person name="Hubbard T."/>
            <person name="Gibbs R.A."/>
            <person name="Beck S."/>
            <person name="Rogers J."/>
            <person name="Bentley D.R."/>
        </authorList>
    </citation>
    <scope>NUCLEOTIDE SEQUENCE [LARGE SCALE GENOMIC DNA]</scope>
</reference>
<reference key="3">
    <citation type="journal article" date="2005" name="J. Cell Sci.">
        <title>Secretory carrier membrane proteins interact and regulate trafficking of the organellar (Na+,K+)/H+ exchanger NHE7.</title>
        <authorList>
            <person name="Lin P.J."/>
            <person name="Williams W.P."/>
            <person name="Luu Y."/>
            <person name="Molday R.S."/>
            <person name="Orlowski J."/>
            <person name="Numata M."/>
        </authorList>
    </citation>
    <scope>SUBCELLULAR LOCATION</scope>
    <scope>INTERACTION WITH SCAMP1; SCAMP2 AND SCAMP5</scope>
</reference>
<reference key="4">
    <citation type="journal article" date="2010" name="J. Membr. Biol.">
        <title>A membrane-proximal region in the C-terminal tail of NHE7 is required for its distribution in the trans-Golgi network, distinct from NHE6 localization at endosomes.</title>
        <authorList>
            <person name="Fukura N."/>
            <person name="Ohgaki R."/>
            <person name="Matsushita M."/>
            <person name="Nakamura N."/>
            <person name="Mitsui K."/>
            <person name="Kanazawa H."/>
        </authorList>
    </citation>
    <scope>SUBCELLULAR LOCATION</scope>
</reference>
<reference key="5">
    <citation type="journal article" date="2019" name="Hum. Mol. Genet.">
        <title>A recurrent missense variant in SLC9A7 causes nonsyndromic X-linked intellectual disability with alteration of Golgi acidification and aberrant glycosylation.</title>
        <authorList>
            <person name="Khayat W."/>
            <person name="Hackett A."/>
            <person name="Shaw M."/>
            <person name="Ilie A."/>
            <person name="Dudding-Byth T."/>
            <person name="Kalscheuer V.M."/>
            <person name="Christie L."/>
            <person name="Corbett M.A."/>
            <person name="Juusola J."/>
            <person name="Friend K.L."/>
            <person name="Kirmse B.M."/>
            <person name="Gecz J."/>
            <person name="Field M."/>
            <person name="Orlowski J."/>
        </authorList>
    </citation>
    <scope>INVOLVEMENT IN MRX108</scope>
    <scope>VARIANT MRX108 PHE-515</scope>
    <scope>CHARACTERIZATION OF VARIANT MRX108 PHE-515</scope>
    <scope>FUNCTION</scope>
    <scope>GLYCOSYLATION AT ASN-145</scope>
    <scope>SUBCELLULAR LOCATION</scope>
    <scope>TOPOLOGY</scope>
</reference>
<gene>
    <name type="primary">SLC9A7</name>
    <name type="synonym">NHE7</name>
</gene>
<dbReference type="EMBL" id="AF298591">
    <property type="protein sequence ID" value="AAK54508.1"/>
    <property type="molecule type" value="mRNA"/>
</dbReference>
<dbReference type="EMBL" id="AL050307">
    <property type="status" value="NOT_ANNOTATED_CDS"/>
    <property type="molecule type" value="Genomic_DNA"/>
</dbReference>
<dbReference type="EMBL" id="AL022165">
    <property type="status" value="NOT_ANNOTATED_CDS"/>
    <property type="molecule type" value="Genomic_DNA"/>
</dbReference>
<dbReference type="CCDS" id="CCDS14269.1"/>
<dbReference type="RefSeq" id="NP_115980.1">
    <property type="nucleotide sequence ID" value="NM_032591.3"/>
</dbReference>
<dbReference type="SMR" id="Q96T83"/>
<dbReference type="BioGRID" id="124198">
    <property type="interactions" value="6"/>
</dbReference>
<dbReference type="FunCoup" id="Q96T83">
    <property type="interactions" value="663"/>
</dbReference>
<dbReference type="IntAct" id="Q96T83">
    <property type="interactions" value="10"/>
</dbReference>
<dbReference type="MINT" id="Q96T83"/>
<dbReference type="STRING" id="9606.ENSP00000480916"/>
<dbReference type="TCDB" id="2.A.36.1.3">
    <property type="family name" value="the monovalent cation:proton antiporter-1 (cpa1) family"/>
</dbReference>
<dbReference type="GlyCosmos" id="Q96T83">
    <property type="glycosylation" value="1 site, No reported glycans"/>
</dbReference>
<dbReference type="GlyGen" id="Q96T83">
    <property type="glycosylation" value="1 site, 1 N-linked glycan (1 site)"/>
</dbReference>
<dbReference type="iPTMnet" id="Q96T83"/>
<dbReference type="PhosphoSitePlus" id="Q96T83"/>
<dbReference type="SwissPalm" id="Q96T83"/>
<dbReference type="BioMuta" id="SLC9A7"/>
<dbReference type="DMDM" id="44888236"/>
<dbReference type="jPOST" id="Q96T83"/>
<dbReference type="MassIVE" id="Q96T83"/>
<dbReference type="PaxDb" id="9606-ENSP00000480916"/>
<dbReference type="PeptideAtlas" id="Q96T83"/>
<dbReference type="ProteomicsDB" id="78214"/>
<dbReference type="TopDownProteomics" id="Q96T83"/>
<dbReference type="Antibodypedia" id="25223">
    <property type="antibodies" value="120 antibodies from 24 providers"/>
</dbReference>
<dbReference type="DNASU" id="84679"/>
<dbReference type="Ensembl" id="ENST00000328306.4">
    <property type="protein sequence ID" value="ENSP00000330320.4"/>
    <property type="gene ID" value="ENSG00000065923.10"/>
</dbReference>
<dbReference type="GeneID" id="84679"/>
<dbReference type="KEGG" id="hsa:84679"/>
<dbReference type="UCSC" id="uc004dgu.3">
    <property type="organism name" value="human"/>
</dbReference>
<dbReference type="AGR" id="HGNC:17123"/>
<dbReference type="CTD" id="84679"/>
<dbReference type="DisGeNET" id="84679"/>
<dbReference type="GeneCards" id="SLC9A7"/>
<dbReference type="HGNC" id="HGNC:17123">
    <property type="gene designation" value="SLC9A7"/>
</dbReference>
<dbReference type="HPA" id="ENSG00000065923">
    <property type="expression patterns" value="Tissue enhanced (brain)"/>
</dbReference>
<dbReference type="MalaCards" id="SLC9A7"/>
<dbReference type="MIM" id="300368">
    <property type="type" value="gene"/>
</dbReference>
<dbReference type="MIM" id="301024">
    <property type="type" value="phenotype"/>
</dbReference>
<dbReference type="neXtProt" id="NX_Q96T83"/>
<dbReference type="OpenTargets" id="ENSG00000065923"/>
<dbReference type="Orphanet" id="777">
    <property type="disease" value="X-linked non-syndromic intellectual disability"/>
</dbReference>
<dbReference type="PharmGKB" id="PA38200"/>
<dbReference type="VEuPathDB" id="HostDB:ENSG00000065923"/>
<dbReference type="eggNOG" id="KOG1965">
    <property type="taxonomic scope" value="Eukaryota"/>
</dbReference>
<dbReference type="GeneTree" id="ENSGT00940000153460"/>
<dbReference type="InParanoid" id="Q96T83"/>
<dbReference type="OrthoDB" id="196264at2759"/>
<dbReference type="PAN-GO" id="Q96T83">
    <property type="GO annotations" value="7 GO annotations based on evolutionary models"/>
</dbReference>
<dbReference type="PhylomeDB" id="Q96T83"/>
<dbReference type="TreeFam" id="TF318755"/>
<dbReference type="PathwayCommons" id="Q96T83"/>
<dbReference type="Reactome" id="R-HSA-425986">
    <property type="pathway name" value="Sodium/Proton exchangers"/>
</dbReference>
<dbReference type="SignaLink" id="Q96T83"/>
<dbReference type="SIGNOR" id="Q96T83"/>
<dbReference type="BioGRID-ORCS" id="84679">
    <property type="hits" value="11 hits in 776 CRISPR screens"/>
</dbReference>
<dbReference type="ChiTaRS" id="SLC9A7">
    <property type="organism name" value="human"/>
</dbReference>
<dbReference type="GenomeRNAi" id="84679"/>
<dbReference type="Pharos" id="Q96T83">
    <property type="development level" value="Tbio"/>
</dbReference>
<dbReference type="PRO" id="PR:Q96T83"/>
<dbReference type="Proteomes" id="UP000005640">
    <property type="component" value="Chromosome X"/>
</dbReference>
<dbReference type="RNAct" id="Q96T83">
    <property type="molecule type" value="protein"/>
</dbReference>
<dbReference type="Bgee" id="ENSG00000065923">
    <property type="expression patterns" value="Expressed in pons and 175 other cell types or tissues"/>
</dbReference>
<dbReference type="ExpressionAtlas" id="Q96T83">
    <property type="expression patterns" value="baseline and differential"/>
</dbReference>
<dbReference type="GO" id="GO:0000139">
    <property type="term" value="C:Golgi membrane"/>
    <property type="evidence" value="ECO:0000304"/>
    <property type="project" value="Reactome"/>
</dbReference>
<dbReference type="GO" id="GO:0043231">
    <property type="term" value="C:intracellular membrane-bounded organelle"/>
    <property type="evidence" value="ECO:0000314"/>
    <property type="project" value="HPA"/>
</dbReference>
<dbReference type="GO" id="GO:0016020">
    <property type="term" value="C:membrane"/>
    <property type="evidence" value="ECO:0000314"/>
    <property type="project" value="UniProtKB"/>
</dbReference>
<dbReference type="GO" id="GO:0005886">
    <property type="term" value="C:plasma membrane"/>
    <property type="evidence" value="ECO:0000314"/>
    <property type="project" value="UniProtKB"/>
</dbReference>
<dbReference type="GO" id="GO:0055037">
    <property type="term" value="C:recycling endosome"/>
    <property type="evidence" value="ECO:0000318"/>
    <property type="project" value="GO_Central"/>
</dbReference>
<dbReference type="GO" id="GO:0055038">
    <property type="term" value="C:recycling endosome membrane"/>
    <property type="evidence" value="ECO:0000314"/>
    <property type="project" value="UniProtKB"/>
</dbReference>
<dbReference type="GO" id="GO:0005802">
    <property type="term" value="C:trans-Golgi network"/>
    <property type="evidence" value="ECO:0000314"/>
    <property type="project" value="UniProtKB"/>
</dbReference>
<dbReference type="GO" id="GO:0015386">
    <property type="term" value="F:potassium:proton antiporter activity"/>
    <property type="evidence" value="ECO:0000314"/>
    <property type="project" value="UniProtKB"/>
</dbReference>
<dbReference type="GO" id="GO:0015385">
    <property type="term" value="F:sodium:proton antiporter activity"/>
    <property type="evidence" value="ECO:0000314"/>
    <property type="project" value="UniProtKB"/>
</dbReference>
<dbReference type="GO" id="GO:0006811">
    <property type="term" value="P:monoatomic ion transport"/>
    <property type="evidence" value="ECO:0000304"/>
    <property type="project" value="Reactome"/>
</dbReference>
<dbReference type="GO" id="GO:0071805">
    <property type="term" value="P:potassium ion transmembrane transport"/>
    <property type="evidence" value="ECO:0000318"/>
    <property type="project" value="GO_Central"/>
</dbReference>
<dbReference type="GO" id="GO:1905526">
    <property type="term" value="P:regulation of Golgi lumen acidification"/>
    <property type="evidence" value="ECO:0000315"/>
    <property type="project" value="UniProtKB"/>
</dbReference>
<dbReference type="GO" id="GO:0051453">
    <property type="term" value="P:regulation of intracellular pH"/>
    <property type="evidence" value="ECO:0000318"/>
    <property type="project" value="GO_Central"/>
</dbReference>
<dbReference type="GO" id="GO:0006885">
    <property type="term" value="P:regulation of pH"/>
    <property type="evidence" value="ECO:0000314"/>
    <property type="project" value="UniProtKB"/>
</dbReference>
<dbReference type="GO" id="GO:0098719">
    <property type="term" value="P:sodium ion import across plasma membrane"/>
    <property type="evidence" value="ECO:0000318"/>
    <property type="project" value="GO_Central"/>
</dbReference>
<dbReference type="Gene3D" id="6.10.140.1330">
    <property type="match status" value="1"/>
</dbReference>
<dbReference type="InterPro" id="IPR018422">
    <property type="entry name" value="Cation/H_exchanger_CPA1"/>
</dbReference>
<dbReference type="InterPro" id="IPR006153">
    <property type="entry name" value="Cation/H_exchanger_TM"/>
</dbReference>
<dbReference type="InterPro" id="IPR004709">
    <property type="entry name" value="NaH_exchanger"/>
</dbReference>
<dbReference type="InterPro" id="IPR002090">
    <property type="entry name" value="NHE-6/7/9"/>
</dbReference>
<dbReference type="NCBIfam" id="TIGR00840">
    <property type="entry name" value="b_cpa1"/>
    <property type="match status" value="1"/>
</dbReference>
<dbReference type="PANTHER" id="PTHR10110">
    <property type="entry name" value="SODIUM/HYDROGEN EXCHANGER"/>
    <property type="match status" value="1"/>
</dbReference>
<dbReference type="PANTHER" id="PTHR10110:SF62">
    <property type="entry name" value="SODIUM_HYDROGEN EXCHANGER 7"/>
    <property type="match status" value="1"/>
</dbReference>
<dbReference type="Pfam" id="PF00999">
    <property type="entry name" value="Na_H_Exchanger"/>
    <property type="match status" value="1"/>
</dbReference>
<dbReference type="PRINTS" id="PR01084">
    <property type="entry name" value="NAHEXCHNGR"/>
</dbReference>
<dbReference type="PRINTS" id="PR01088">
    <property type="entry name" value="NAHEXCHNGR6"/>
</dbReference>
<organism>
    <name type="scientific">Homo sapiens</name>
    <name type="common">Human</name>
    <dbReference type="NCBI Taxonomy" id="9606"/>
    <lineage>
        <taxon>Eukaryota</taxon>
        <taxon>Metazoa</taxon>
        <taxon>Chordata</taxon>
        <taxon>Craniata</taxon>
        <taxon>Vertebrata</taxon>
        <taxon>Euteleostomi</taxon>
        <taxon>Mammalia</taxon>
        <taxon>Eutheria</taxon>
        <taxon>Euarchontoglires</taxon>
        <taxon>Primates</taxon>
        <taxon>Haplorrhini</taxon>
        <taxon>Catarrhini</taxon>
        <taxon>Hominidae</taxon>
        <taxon>Homo</taxon>
    </lineage>
</organism>
<keyword id="KW-0050">Antiport</keyword>
<keyword id="KW-1003">Cell membrane</keyword>
<keyword id="KW-0225">Disease variant</keyword>
<keyword id="KW-0967">Endosome</keyword>
<keyword id="KW-0325">Glycoprotein</keyword>
<keyword id="KW-0333">Golgi apparatus</keyword>
<keyword id="KW-0991">Intellectual disability</keyword>
<keyword id="KW-0406">Ion transport</keyword>
<keyword id="KW-0472">Membrane</keyword>
<keyword id="KW-0597">Phosphoprotein</keyword>
<keyword id="KW-0630">Potassium</keyword>
<keyword id="KW-0633">Potassium transport</keyword>
<keyword id="KW-1267">Proteomics identification</keyword>
<keyword id="KW-1185">Reference proteome</keyword>
<keyword id="KW-0915">Sodium</keyword>
<keyword id="KW-0739">Sodium transport</keyword>
<keyword id="KW-0812">Transmembrane</keyword>
<keyword id="KW-1133">Transmembrane helix</keyword>
<keyword id="KW-0813">Transport</keyword>
<proteinExistence type="evidence at protein level"/>
<evidence type="ECO:0000250" key="1">
    <source>
        <dbReference type="UniProtKB" id="Q8BLV3"/>
    </source>
</evidence>
<evidence type="ECO:0000255" key="2"/>
<evidence type="ECO:0000256" key="3">
    <source>
        <dbReference type="SAM" id="MobiDB-lite"/>
    </source>
</evidence>
<evidence type="ECO:0000269" key="4">
    <source>
    </source>
</evidence>
<evidence type="ECO:0000269" key="5">
    <source>
    </source>
</evidence>
<evidence type="ECO:0000269" key="6">
    <source>
    </source>
</evidence>
<evidence type="ECO:0000269" key="7">
    <source>
    </source>
</evidence>
<evidence type="ECO:0000305" key="8"/>
<evidence type="ECO:0000305" key="9">
    <source>
    </source>
</evidence>
<evidence type="ECO:0000305" key="10">
    <source>
    </source>
</evidence>
<name>SL9A7_HUMAN</name>
<protein>
    <recommendedName>
        <fullName>Sodium/hydrogen exchanger 7</fullName>
    </recommendedName>
    <alternativeName>
        <fullName>Na(+)/H(+) exchanger 7</fullName>
        <shortName>NHE-7</shortName>
    </alternativeName>
    <alternativeName>
        <fullName>Solute carrier family 9 member 7</fullName>
    </alternativeName>
</protein>
<accession>Q96T83</accession>
<accession>O75827</accession>
<accession>Q5JXP9</accession>
<feature type="chain" id="PRO_0000052363" description="Sodium/hydrogen exchanger 7">
    <location>
        <begin position="1"/>
        <end position="725"/>
    </location>
</feature>
<feature type="topological domain" description="Cytoplasmic" evidence="10">
    <location>
        <begin position="1"/>
        <end position="21"/>
    </location>
</feature>
<feature type="transmembrane region" description="Helical" evidence="2">
    <location>
        <begin position="22"/>
        <end position="42"/>
    </location>
</feature>
<feature type="topological domain" description="Lumenal" evidence="10">
    <location>
        <begin position="43"/>
        <end position="70"/>
    </location>
</feature>
<feature type="transmembrane region" description="Helical" evidence="2">
    <location>
        <begin position="71"/>
        <end position="91"/>
    </location>
</feature>
<feature type="topological domain" description="Cytoplasmic" evidence="10">
    <location>
        <begin position="92"/>
        <end position="95"/>
    </location>
</feature>
<feature type="transmembrane region" description="Helical" evidence="2">
    <location>
        <begin position="96"/>
        <end position="116"/>
    </location>
</feature>
<feature type="topological domain" description="Lumenal" evidence="10">
    <location>
        <begin position="117"/>
        <end position="175"/>
    </location>
</feature>
<feature type="transmembrane region" description="Helical" evidence="2">
    <location>
        <begin position="176"/>
        <end position="196"/>
    </location>
</feature>
<feature type="topological domain" description="Cytoplasmic" evidence="10">
    <location>
        <begin position="197"/>
        <end position="210"/>
    </location>
</feature>
<feature type="transmembrane region" description="Helical" evidence="2">
    <location>
        <begin position="211"/>
        <end position="231"/>
    </location>
</feature>
<feature type="topological domain" description="Lumenal" evidence="10">
    <location>
        <begin position="232"/>
        <end position="251"/>
    </location>
</feature>
<feature type="transmembrane region" description="Helical" evidence="2">
    <location>
        <begin position="252"/>
        <end position="272"/>
    </location>
</feature>
<feature type="topological domain" description="Cytoplasmic" evidence="10">
    <location>
        <begin position="273"/>
        <end position="277"/>
    </location>
</feature>
<feature type="transmembrane region" description="Helical" evidence="2">
    <location>
        <begin position="278"/>
        <end position="298"/>
    </location>
</feature>
<feature type="topological domain" description="Lumenal" evidence="10">
    <location>
        <begin position="299"/>
        <end position="322"/>
    </location>
</feature>
<feature type="transmembrane region" description="Helical" evidence="2">
    <location>
        <begin position="323"/>
        <end position="343"/>
    </location>
</feature>
<feature type="topological domain" description="Cytoplasmic" evidence="10">
    <location>
        <begin position="344"/>
        <end position="349"/>
    </location>
</feature>
<feature type="transmembrane region" description="Helical" evidence="2">
    <location>
        <begin position="350"/>
        <end position="370"/>
    </location>
</feature>
<feature type="transmembrane region" description="Helical" evidence="2">
    <location>
        <begin position="371"/>
        <end position="391"/>
    </location>
</feature>
<feature type="topological domain" description="Cytoplasmic" evidence="10">
    <location>
        <begin position="392"/>
        <end position="414"/>
    </location>
</feature>
<feature type="transmembrane region" description="Helical" evidence="2">
    <location>
        <begin position="415"/>
        <end position="435"/>
    </location>
</feature>
<feature type="topological domain" description="Lumenal" evidence="10">
    <location>
        <begin position="436"/>
        <end position="442"/>
    </location>
</feature>
<feature type="transmembrane region" description="Helical" evidence="2">
    <location>
        <begin position="443"/>
        <end position="463"/>
    </location>
</feature>
<feature type="topological domain" description="Cytoplasmic" evidence="10">
    <location>
        <begin position="464"/>
        <end position="474"/>
    </location>
</feature>
<feature type="transmembrane region" description="Helical" evidence="2">
    <location>
        <begin position="475"/>
        <end position="497"/>
    </location>
</feature>
<feature type="topological domain" description="Lumenal" evidence="10">
    <location>
        <begin position="498"/>
        <end position="513"/>
    </location>
</feature>
<feature type="transmembrane region" description="Helical" evidence="2">
    <location>
        <begin position="514"/>
        <end position="534"/>
    </location>
</feature>
<feature type="topological domain" description="Cytoplasmic" evidence="10">
    <location>
        <begin position="535"/>
        <end position="725"/>
    </location>
</feature>
<feature type="region of interest" description="Disordered" evidence="3">
    <location>
        <begin position="1"/>
        <end position="20"/>
    </location>
</feature>
<feature type="region of interest" description="Required for trans-Golgi network localization" evidence="6">
    <location>
        <begin position="533"/>
        <end position="559"/>
    </location>
</feature>
<feature type="region of interest" description="Required for trans-Golgi network localization" evidence="6">
    <location>
        <begin position="563"/>
        <end position="568"/>
    </location>
</feature>
<feature type="region of interest" description="Disordered" evidence="3">
    <location>
        <begin position="567"/>
        <end position="590"/>
    </location>
</feature>
<feature type="region of interest" description="Disordered" evidence="3">
    <location>
        <begin position="669"/>
        <end position="714"/>
    </location>
</feature>
<feature type="compositionally biased region" description="Low complexity" evidence="3">
    <location>
        <begin position="675"/>
        <end position="684"/>
    </location>
</feature>
<feature type="compositionally biased region" description="Basic and acidic residues" evidence="3">
    <location>
        <begin position="687"/>
        <end position="704"/>
    </location>
</feature>
<feature type="modified residue" description="Phosphoserine" evidence="1">
    <location>
        <position position="545"/>
    </location>
</feature>
<feature type="glycosylation site" description="N-linked (GlcNAc...) asparagine" evidence="2 10">
    <location>
        <position position="145"/>
    </location>
</feature>
<feature type="sequence variant" id="VAR_082101" description="In MRX108; probable gain-of-function variant; affects the regulation of trans-Golgi network/post-Golgi pH homeostasis, causing alkalinization of these compartments compared to wild-type, hence affecting its own glycosylation and that of exported cargo proteins; no effect on subcellular location in the Golgi apparatus and plasma membrane." evidence="7">
    <original>L</original>
    <variation>F</variation>
    <location>
        <position position="515"/>
    </location>
</feature>
<comment type="function">
    <text evidence="4 7">Golgi Na(+), K(+)/(H+) antiporter. Mediates the electoneutral influx of Na(+) or K(+) in exchange for H(+). May contribute to the regulation of Golgi apparatus volume and pH.</text>
</comment>
<comment type="catalytic activity">
    <reaction evidence="4">
        <text>Na(+)(in) + H(+)(out) = Na(+)(out) + H(+)(in)</text>
        <dbReference type="Rhea" id="RHEA:29419"/>
        <dbReference type="ChEBI" id="CHEBI:15378"/>
        <dbReference type="ChEBI" id="CHEBI:29101"/>
    </reaction>
    <physiologicalReaction direction="left-to-right" evidence="9">
        <dbReference type="Rhea" id="RHEA:29420"/>
    </physiologicalReaction>
</comment>
<comment type="catalytic activity">
    <reaction evidence="4">
        <text>K(+)(in) + H(+)(out) = K(+)(out) + H(+)(in)</text>
        <dbReference type="Rhea" id="RHEA:29467"/>
        <dbReference type="ChEBI" id="CHEBI:15378"/>
        <dbReference type="ChEBI" id="CHEBI:29103"/>
    </reaction>
    <physiologicalReaction direction="left-to-right" evidence="9">
        <dbReference type="Rhea" id="RHEA:29468"/>
    </physiologicalReaction>
</comment>
<comment type="activity regulation">
    <text evidence="4">Inhibited by benzamil and quinine but not by amiloride.</text>
</comment>
<comment type="subunit">
    <text evidence="5">Interacts with SCAMP1, SCAMP2 and SCAMP5; may participate in its shuttling from trans-Golgi network to recycling endosomes.</text>
</comment>
<comment type="interaction">
    <interactant intactId="EBI-4319546">
        <id>Q96T83</id>
    </interactant>
    <interactant intactId="EBI-712703">
        <id>O15127</id>
        <label>SCAMP2</label>
    </interactant>
    <organismsDiffer>false</organismsDiffer>
    <experiments>9</experiments>
</comment>
<comment type="subcellular location">
    <subcellularLocation>
        <location evidence="5 6 7">Golgi apparatus</location>
        <location evidence="5 6 7">trans-Golgi network membrane</location>
        <topology evidence="2">Multi-pass membrane protein</topology>
    </subcellularLocation>
    <subcellularLocation>
        <location evidence="5">Recycling endosome membrane</location>
        <topology evidence="2">Multi-pass membrane protein</topology>
    </subcellularLocation>
    <subcellularLocation>
        <location evidence="7">Cell membrane</location>
        <topology evidence="2">Multi-pass membrane protein</topology>
    </subcellularLocation>
</comment>
<comment type="tissue specificity">
    <text evidence="4">Ubiquitously expressed.</text>
</comment>
<comment type="PTM">
    <text evidence="7">N-glycosylated.</text>
</comment>
<comment type="disease" evidence="7">
    <disease id="DI-05522">
        <name>Intellectual developmental disorder, X-linked 108</name>
        <acronym>MRX108</acronym>
        <description>A form of intellectual disability, a disorder characterized by significantly below average general intellectual functioning associated with impairments in adaptive behavior and manifested during the developmental period. Intellectual deficiency is the only primary symptom of non-syndromic X-linked forms, while syndromic forms present with associated physical, neurological and/or psychiatric manifestations.</description>
        <dbReference type="MIM" id="301024"/>
    </disease>
    <text>The disease is caused by variants affecting the gene represented in this entry.</text>
</comment>
<comment type="similarity">
    <text evidence="8">Belongs to the monovalent cation:proton antiporter 1 (CPA1) transporter (TC 2.A.36) family.</text>
</comment>
<sequence length="725" mass="80131">MEPGDAARPGSGRATGAPPPRLLLLPLLLGWGLRVAAAASASSSGAAAEDSSAMEELATEKEAEESHRQDSVSLLTFILLLTLTILTIWLFKHRRVRFLHETGLAMIYGLIVGVILRYGTPATSGRDKSLSCTQEDRAFSTLLVNVSGKFFEYTLKGEISPGKINSVEQNDMLRKVTFDPEVFFNILLPPIIFHAGYSLKKRHFFRNLGSILAYAFLGTAVSCFIIGNLMYGVVKLMKIMGQLSDKFYYTDCLFFGAIISATDPVTVLAIFNELHADVDLYALLFGESVLNDAVAIVLSSSIVAYQPAGLNTHAFDAAAFFKSVGIFLGIFSGSFTMGAVTGVNANVTKFTKLHCFPLLETALFFLMSWSTFLLAEACGFTGVVAVLFCGITQAHYTYNNLSVESRSRTKQLFEVLHFLAENFIFSYMGLALFTFQKHVFSPIFIIGAFVAIFLGRAAHIYPLSFFLNLGRRHKIGWNFQHMMMFSGLRGAMAFALAIRDTASYARQMMFTTTLLIVFFTVWIIGGGTTPMLSWLNIRVGVEEPSEEDQNEHHWQYFRVGVDPDQDPPPNNDSFQVLQGDGPDSARGNRTKQESAWIFRLWYSFDHNYLKPILTHSGPPLTTTLPAWCGLLARCLTSPQVYDNQEPLREEDSDFILTEGDLTLTYGDSTVTANGSSSSHTASTSLEGSRRTKSSSEEVLERDLGMGDQKVSSRGTRLVFPLEDNA</sequence>